<protein>
    <recommendedName>
        <fullName>NADH-ubiquinone oxidoreductase chain 5</fullName>
        <ecNumber evidence="1">7.1.1.2</ecNumber>
    </recommendedName>
    <alternativeName>
        <fullName>NADH dehydrogenase subunit 5</fullName>
    </alternativeName>
</protein>
<reference key="1">
    <citation type="journal article" date="1988" name="Mol. Biol. Evol.">
        <title>Molecular phylogeny and evolution of primate mitochondrial DNA.</title>
        <authorList>
            <person name="Hayasaka K."/>
            <person name="Gojobori T."/>
            <person name="Horai S."/>
        </authorList>
    </citation>
    <scope>NUCLEOTIDE SEQUENCE [GENOMIC DNA]</scope>
</reference>
<reference key="2">
    <citation type="journal article" date="1996" name="Mol. Biol. Evol.">
        <title>Molecular phylogeny of macaques: implications of nucleotide sequences from an 896-base pair region of mitochondrial DNA.</title>
        <authorList>
            <person name="Hayasaka K."/>
            <person name="Fujii K."/>
            <person name="Horai S."/>
        </authorList>
    </citation>
    <scope>NUCLEOTIDE SEQUENCE [GENOMIC DNA]</scope>
</reference>
<sequence>MIMHTPIMMTTLISLTLPIFATLTNPYKKRSYPDYVKTTVMYAFITSLPSTTLFILSNQETTIWSWHWMTTQTLDLTLS</sequence>
<geneLocation type="mitochondrion"/>
<name>NU5M_MACFA</name>
<dbReference type="EC" id="7.1.1.2" evidence="1"/>
<dbReference type="EMBL" id="M22653">
    <property type="protein sequence ID" value="AAA69758.1"/>
    <property type="molecule type" value="Genomic_DNA"/>
</dbReference>
<dbReference type="EMBL" id="D85275">
    <property type="protein sequence ID" value="BAA12762.1"/>
    <property type="molecule type" value="Genomic_DNA"/>
</dbReference>
<dbReference type="PIR" id="I77326">
    <property type="entry name" value="I77326"/>
</dbReference>
<dbReference type="SMR" id="P50665"/>
<dbReference type="STRING" id="9541.ENSMFAP00000046146"/>
<dbReference type="Proteomes" id="UP000233100">
    <property type="component" value="Mitochondrion"/>
</dbReference>
<dbReference type="GO" id="GO:0005743">
    <property type="term" value="C:mitochondrial inner membrane"/>
    <property type="evidence" value="ECO:0000250"/>
    <property type="project" value="UniProtKB"/>
</dbReference>
<dbReference type="GO" id="GO:0008137">
    <property type="term" value="F:NADH dehydrogenase (ubiquinone) activity"/>
    <property type="evidence" value="ECO:0000250"/>
    <property type="project" value="UniProtKB"/>
</dbReference>
<dbReference type="GO" id="GO:0006120">
    <property type="term" value="P:mitochondrial electron transport, NADH to ubiquinone"/>
    <property type="evidence" value="ECO:0000250"/>
    <property type="project" value="UniProtKB"/>
</dbReference>
<dbReference type="GO" id="GO:0032981">
    <property type="term" value="P:mitochondrial respiratory chain complex I assembly"/>
    <property type="evidence" value="ECO:0000250"/>
    <property type="project" value="UniProtKB"/>
</dbReference>
<evidence type="ECO:0000250" key="1">
    <source>
        <dbReference type="UniProtKB" id="P03915"/>
    </source>
</evidence>
<evidence type="ECO:0000250" key="2">
    <source>
        <dbReference type="UniProtKB" id="P03920"/>
    </source>
</evidence>
<evidence type="ECO:0000255" key="3"/>
<evidence type="ECO:0000305" key="4"/>
<accession>P50665</accession>
<proteinExistence type="inferred from homology"/>
<comment type="function">
    <text evidence="1">Core subunit of the mitochondrial membrane respiratory chain NADH dehydrogenase (Complex I) which catalyzes electron transfer from NADH through the respiratory chain, using ubiquinone as an electron acceptor. Essential for the catalytic activity and assembly of complex I.</text>
</comment>
<comment type="catalytic activity">
    <reaction evidence="1">
        <text>a ubiquinone + NADH + 5 H(+)(in) = a ubiquinol + NAD(+) + 4 H(+)(out)</text>
        <dbReference type="Rhea" id="RHEA:29091"/>
        <dbReference type="Rhea" id="RHEA-COMP:9565"/>
        <dbReference type="Rhea" id="RHEA-COMP:9566"/>
        <dbReference type="ChEBI" id="CHEBI:15378"/>
        <dbReference type="ChEBI" id="CHEBI:16389"/>
        <dbReference type="ChEBI" id="CHEBI:17976"/>
        <dbReference type="ChEBI" id="CHEBI:57540"/>
        <dbReference type="ChEBI" id="CHEBI:57945"/>
        <dbReference type="EC" id="7.1.1.2"/>
    </reaction>
</comment>
<comment type="subunit">
    <text evidence="2">Core subunit of respiratory chain NADH dehydrogenase (Complex I) which is composed of 45 different subunits.</text>
</comment>
<comment type="subcellular location">
    <subcellularLocation>
        <location evidence="2">Mitochondrion inner membrane</location>
        <topology evidence="3">Multi-pass membrane protein</topology>
    </subcellularLocation>
</comment>
<comment type="similarity">
    <text evidence="4">Belongs to the complex I subunit 5 family.</text>
</comment>
<organism>
    <name type="scientific">Macaca fascicularis</name>
    <name type="common">Crab-eating macaque</name>
    <name type="synonym">Cynomolgus monkey</name>
    <dbReference type="NCBI Taxonomy" id="9541"/>
    <lineage>
        <taxon>Eukaryota</taxon>
        <taxon>Metazoa</taxon>
        <taxon>Chordata</taxon>
        <taxon>Craniata</taxon>
        <taxon>Vertebrata</taxon>
        <taxon>Euteleostomi</taxon>
        <taxon>Mammalia</taxon>
        <taxon>Eutheria</taxon>
        <taxon>Euarchontoglires</taxon>
        <taxon>Primates</taxon>
        <taxon>Haplorrhini</taxon>
        <taxon>Catarrhini</taxon>
        <taxon>Cercopithecidae</taxon>
        <taxon>Cercopithecinae</taxon>
        <taxon>Macaca</taxon>
    </lineage>
</organism>
<feature type="chain" id="PRO_0000118109" description="NADH-ubiquinone oxidoreductase chain 5">
    <location>
        <begin position="1"/>
        <end position="79" status="greater than"/>
    </location>
</feature>
<feature type="transmembrane region" description="Helical" evidence="3">
    <location>
        <begin position="5"/>
        <end position="27"/>
    </location>
</feature>
<feature type="transmembrane region" description="Helical" evidence="3">
    <location>
        <begin position="40"/>
        <end position="57"/>
    </location>
</feature>
<feature type="non-terminal residue">
    <location>
        <position position="79"/>
    </location>
</feature>
<gene>
    <name type="primary">MT-ND5</name>
    <name type="synonym">MTND5</name>
    <name type="synonym">NADH5</name>
    <name type="synonym">ND5</name>
</gene>
<keyword id="KW-0249">Electron transport</keyword>
<keyword id="KW-0472">Membrane</keyword>
<keyword id="KW-0496">Mitochondrion</keyword>
<keyword id="KW-0999">Mitochondrion inner membrane</keyword>
<keyword id="KW-0520">NAD</keyword>
<keyword id="KW-1185">Reference proteome</keyword>
<keyword id="KW-0679">Respiratory chain</keyword>
<keyword id="KW-1278">Translocase</keyword>
<keyword id="KW-0812">Transmembrane</keyword>
<keyword id="KW-1133">Transmembrane helix</keyword>
<keyword id="KW-0813">Transport</keyword>
<keyword id="KW-0830">Ubiquinone</keyword>